<organism>
    <name type="scientific">Phasmahyla jandaia</name>
    <name type="common">Jandaia leaf frog</name>
    <name type="synonym">Phyllomedusa jandaia</name>
    <dbReference type="NCBI Taxonomy" id="762504"/>
    <lineage>
        <taxon>Eukaryota</taxon>
        <taxon>Metazoa</taxon>
        <taxon>Chordata</taxon>
        <taxon>Craniata</taxon>
        <taxon>Vertebrata</taxon>
        <taxon>Euteleostomi</taxon>
        <taxon>Amphibia</taxon>
        <taxon>Batrachia</taxon>
        <taxon>Anura</taxon>
        <taxon>Neobatrachia</taxon>
        <taxon>Hyloidea</taxon>
        <taxon>Hylidae</taxon>
        <taxon>Phyllomedusinae</taxon>
        <taxon>Phasmahyla</taxon>
    </lineage>
</organism>
<keyword id="KW-0878">Amphibian defense peptide</keyword>
<keyword id="KW-0903">Direct protein sequencing</keyword>
<keyword id="KW-0873">Pyrrolidone carboxylic acid</keyword>
<keyword id="KW-0964">Secreted</keyword>
<evidence type="ECO:0000255" key="1"/>
<evidence type="ECO:0000269" key="2">
    <source>
    </source>
</evidence>
<evidence type="ECO:0000303" key="3">
    <source>
    </source>
</evidence>
<evidence type="ECO:0000305" key="4"/>
<dbReference type="GO" id="GO:0005576">
    <property type="term" value="C:extracellular region"/>
    <property type="evidence" value="ECO:0007669"/>
    <property type="project" value="UniProtKB-SubCell"/>
</dbReference>
<dbReference type="GO" id="GO:0006952">
    <property type="term" value="P:defense response"/>
    <property type="evidence" value="ECO:0007669"/>
    <property type="project" value="UniProtKB-KW"/>
</dbReference>
<dbReference type="InterPro" id="IPR013266">
    <property type="entry name" value="Tryptophillin"/>
</dbReference>
<dbReference type="Pfam" id="PF08248">
    <property type="entry name" value="Tryp_FSAP"/>
    <property type="match status" value="1"/>
</dbReference>
<name>TY33_PHAJA</name>
<comment type="subcellular location">
    <subcellularLocation>
        <location evidence="2">Secreted</location>
    </subcellularLocation>
</comment>
<comment type="tissue specificity">
    <text evidence="2">Expressed by the skin glands.</text>
</comment>
<comment type="mass spectrometry" mass="1583.7" method="MALDI" evidence="2"/>
<comment type="similarity">
    <text evidence="1">Belongs to the frog skin active peptide (FSAP) family. Tryptophillin subfamily.</text>
</comment>
<protein>
    <recommendedName>
        <fullName>Tryptophyllin-T3-3</fullName>
        <shortName evidence="3">Pj-T3-3</shortName>
    </recommendedName>
</protein>
<reference evidence="4" key="1">
    <citation type="journal article" date="2011" name="Toxicon">
        <title>Peptidomic dissection of the skin secretion of Phasmahyla jandaia (Bokermann and Sazima, 1978) (Anura, Hylidae, Phyllomedusinae).</title>
        <authorList>
            <person name="Rates B."/>
            <person name="Silva L.P."/>
            <person name="Ireno I.C."/>
            <person name="Leite F.S."/>
            <person name="Borges M.H."/>
            <person name="Bloch C. Jr."/>
            <person name="De Lima M.E."/>
            <person name="Pimenta A.M."/>
        </authorList>
    </citation>
    <scope>PROTEIN SEQUENCE</scope>
    <scope>SUBCELLULAR LOCATION</scope>
    <scope>TISSUE SPECIFICITY</scope>
    <scope>MASS SPECTROMETRY</scope>
    <scope>PYROGLUTAMATE FORMATION AT GLN-1</scope>
    <source>
        <tissue evidence="2">Skin secretion</tissue>
    </source>
</reference>
<accession>P86612</accession>
<proteinExistence type="evidence at protein level"/>
<sequence length="13" mass="1602">QDKPFWDPPIYPV</sequence>
<feature type="peptide" id="PRO_0000404629" description="Tryptophyllin-T3-3" evidence="2">
    <location>
        <begin position="1"/>
        <end position="13"/>
    </location>
</feature>
<feature type="modified residue" description="Pyrrolidone carboxylic acid" evidence="2">
    <location>
        <position position="1"/>
    </location>
</feature>
<feature type="unsure residue" description="K or Q" evidence="2">
    <location>
        <position position="3"/>
    </location>
</feature>
<feature type="unsure residue" description="I or L" evidence="2">
    <location>
        <position position="10"/>
    </location>
</feature>